<accession>Q2YY21</accession>
<sequence length="383" mass="43209">MNELEFVTKHRRHLHQHPELSLHEFETTAYIKAFLDSLNIKYDCPLETGVIAYLEGNDSHTIAYRADIDALPILEENDVPYRSQSDHVMHACGHDGHTTALMLFVQRCKDMQDSGQLPQNVVFIFQPAEETGGGANRLIKAGAFDKYPIEAVFGIHVNPFADEGIAVIRDEEITASATEYRFFLTGLSSHVADKEQGHSCGEALQHVLTQISQIQQFHLNGLKRNIVHIGHFKAGEAINTVPSNGYLEGTIRTYDIDDLTIVKNQMQKIAESVKLLFNVDCEVKFAEGYPPTINSPKLRTQIEDALIKADLNVYDKPTPFLFGEDFSFYGQQLAPAYFVFIGTRNEDKGFVTGLHTSHLNFDEKVLINVVNFYENLLNNYKEV</sequence>
<dbReference type="EC" id="3.-.-.-"/>
<dbReference type="EMBL" id="AJ938182">
    <property type="protein sequence ID" value="CAI80942.1"/>
    <property type="molecule type" value="Genomic_DNA"/>
</dbReference>
<dbReference type="RefSeq" id="WP_001003788.1">
    <property type="nucleotide sequence ID" value="NC_007622.1"/>
</dbReference>
<dbReference type="SMR" id="Q2YY21"/>
<dbReference type="KEGG" id="sab:SAB1253"/>
<dbReference type="HOGENOM" id="CLU_023257_1_0_9"/>
<dbReference type="GO" id="GO:0016787">
    <property type="term" value="F:hydrolase activity"/>
    <property type="evidence" value="ECO:0007669"/>
    <property type="project" value="UniProtKB-KW"/>
</dbReference>
<dbReference type="CDD" id="cd05670">
    <property type="entry name" value="M20_Acy1_YkuR-like"/>
    <property type="match status" value="1"/>
</dbReference>
<dbReference type="FunFam" id="3.30.70.360:FF:000022">
    <property type="entry name" value="Hippurate hydrolase"/>
    <property type="match status" value="1"/>
</dbReference>
<dbReference type="Gene3D" id="3.30.70.360">
    <property type="match status" value="1"/>
</dbReference>
<dbReference type="Gene3D" id="3.40.630.10">
    <property type="entry name" value="Zn peptidases"/>
    <property type="match status" value="1"/>
</dbReference>
<dbReference type="InterPro" id="IPR017439">
    <property type="entry name" value="Amidohydrolase"/>
</dbReference>
<dbReference type="InterPro" id="IPR036264">
    <property type="entry name" value="Bact_exopeptidase_dim_dom"/>
</dbReference>
<dbReference type="InterPro" id="IPR002933">
    <property type="entry name" value="Peptidase_M20"/>
</dbReference>
<dbReference type="InterPro" id="IPR011650">
    <property type="entry name" value="Peptidase_M20_dimer"/>
</dbReference>
<dbReference type="NCBIfam" id="TIGR01891">
    <property type="entry name" value="amidohydrolases"/>
    <property type="match status" value="1"/>
</dbReference>
<dbReference type="PANTHER" id="PTHR11014:SF63">
    <property type="entry name" value="METALLOPEPTIDASE, PUTATIVE (AFU_ORTHOLOGUE AFUA_6G09600)-RELATED"/>
    <property type="match status" value="1"/>
</dbReference>
<dbReference type="PANTHER" id="PTHR11014">
    <property type="entry name" value="PEPTIDASE M20 FAMILY MEMBER"/>
    <property type="match status" value="1"/>
</dbReference>
<dbReference type="Pfam" id="PF07687">
    <property type="entry name" value="M20_dimer"/>
    <property type="match status" value="1"/>
</dbReference>
<dbReference type="Pfam" id="PF01546">
    <property type="entry name" value="Peptidase_M20"/>
    <property type="match status" value="1"/>
</dbReference>
<dbReference type="PIRSF" id="PIRSF005962">
    <property type="entry name" value="Pept_M20D_amidohydro"/>
    <property type="match status" value="1"/>
</dbReference>
<dbReference type="SUPFAM" id="SSF55031">
    <property type="entry name" value="Bacterial exopeptidase dimerisation domain"/>
    <property type="match status" value="1"/>
</dbReference>
<dbReference type="SUPFAM" id="SSF53187">
    <property type="entry name" value="Zn-dependent exopeptidases"/>
    <property type="match status" value="1"/>
</dbReference>
<reference key="1">
    <citation type="journal article" date="2007" name="PLoS ONE">
        <title>Molecular correlates of host specialization in Staphylococcus aureus.</title>
        <authorList>
            <person name="Herron-Olson L."/>
            <person name="Fitzgerald J.R."/>
            <person name="Musser J.M."/>
            <person name="Kapur V."/>
        </authorList>
    </citation>
    <scope>NUCLEOTIDE SEQUENCE [LARGE SCALE GENOMIC DNA]</scope>
    <source>
        <strain>bovine RF122 / ET3-1</strain>
    </source>
</reference>
<comment type="similarity">
    <text evidence="1">Belongs to the peptidase M20 family.</text>
</comment>
<proteinExistence type="inferred from homology"/>
<feature type="chain" id="PRO_0000298618" description="Uncharacterized hydrolase SAB1253">
    <location>
        <begin position="1"/>
        <end position="383"/>
    </location>
</feature>
<evidence type="ECO:0000305" key="1"/>
<organism>
    <name type="scientific">Staphylococcus aureus (strain bovine RF122 / ET3-1)</name>
    <dbReference type="NCBI Taxonomy" id="273036"/>
    <lineage>
        <taxon>Bacteria</taxon>
        <taxon>Bacillati</taxon>
        <taxon>Bacillota</taxon>
        <taxon>Bacilli</taxon>
        <taxon>Bacillales</taxon>
        <taxon>Staphylococcaceae</taxon>
        <taxon>Staphylococcus</taxon>
    </lineage>
</organism>
<gene>
    <name type="ordered locus">SAB1253</name>
</gene>
<keyword id="KW-0378">Hydrolase</keyword>
<name>Y1253_STAAB</name>
<protein>
    <recommendedName>
        <fullName>Uncharacterized hydrolase SAB1253</fullName>
        <ecNumber>3.-.-.-</ecNumber>
    </recommendedName>
</protein>